<gene>
    <name evidence="1" type="primary">murG</name>
    <name type="ordered locus">sync_2714</name>
</gene>
<accession>Q0I6M0</accession>
<name>MURG_SYNS3</name>
<proteinExistence type="inferred from homology"/>
<sequence length="358" mass="37668">MPRLLVAASGTGGHLFPALSVADALLEPWSVRWVGVPDRLETSLVPGRYPLTTVKAGGLQGRGLRKLIQLIQLLAASGSIRRLIQRERIDAVFTTGGYIAAPAILAARWCGIPVVLHESNAIPGRVTRLLGRFCTRVAVGLEAAAPRIQGCRAVVTGTPVRAAFLQQQSLPTWVPQGSGPLLVVIGGSQGALGLNRMTRELFPSLLSSGCRIVHLTGSNDPDVGCIEHPLLVERPFSDEIPALLQHADLAISRAGAGSLSELAVSGTPTVLVPFPQAADRHQDANAVCAAAVAAAVIVHQHDPSETTLRDTVWRLLGSKLPGGDPGANPLPEMGQAMRELGVEDADQKLVTLLEGLLN</sequence>
<feature type="chain" id="PRO_0000315187" description="UDP-N-acetylglucosamine--N-acetylmuramyl-(pentapeptide) pyrophosphoryl-undecaprenol N-acetylglucosamine transferase">
    <location>
        <begin position="1"/>
        <end position="358"/>
    </location>
</feature>
<feature type="binding site" evidence="1">
    <location>
        <begin position="11"/>
        <end position="13"/>
    </location>
    <ligand>
        <name>UDP-N-acetyl-alpha-D-glucosamine</name>
        <dbReference type="ChEBI" id="CHEBI:57705"/>
    </ligand>
</feature>
<feature type="binding site" evidence="1">
    <location>
        <position position="120"/>
    </location>
    <ligand>
        <name>UDP-N-acetyl-alpha-D-glucosamine</name>
        <dbReference type="ChEBI" id="CHEBI:57705"/>
    </ligand>
</feature>
<feature type="binding site" evidence="1">
    <location>
        <position position="161"/>
    </location>
    <ligand>
        <name>UDP-N-acetyl-alpha-D-glucosamine</name>
        <dbReference type="ChEBI" id="CHEBI:57705"/>
    </ligand>
</feature>
<feature type="binding site" evidence="1">
    <location>
        <position position="188"/>
    </location>
    <ligand>
        <name>UDP-N-acetyl-alpha-D-glucosamine</name>
        <dbReference type="ChEBI" id="CHEBI:57705"/>
    </ligand>
</feature>
<feature type="binding site" evidence="1">
    <location>
        <position position="282"/>
    </location>
    <ligand>
        <name>UDP-N-acetyl-alpha-D-glucosamine</name>
        <dbReference type="ChEBI" id="CHEBI:57705"/>
    </ligand>
</feature>
<dbReference type="EC" id="2.4.1.227" evidence="1"/>
<dbReference type="EMBL" id="CP000435">
    <property type="protein sequence ID" value="ABI46885.1"/>
    <property type="molecule type" value="Genomic_DNA"/>
</dbReference>
<dbReference type="RefSeq" id="WP_011620606.1">
    <property type="nucleotide sequence ID" value="NC_008319.1"/>
</dbReference>
<dbReference type="SMR" id="Q0I6M0"/>
<dbReference type="STRING" id="64471.sync_2714"/>
<dbReference type="CAZy" id="GT28">
    <property type="family name" value="Glycosyltransferase Family 28"/>
</dbReference>
<dbReference type="KEGG" id="syg:sync_2714"/>
<dbReference type="eggNOG" id="COG0707">
    <property type="taxonomic scope" value="Bacteria"/>
</dbReference>
<dbReference type="HOGENOM" id="CLU_037404_2_1_3"/>
<dbReference type="OrthoDB" id="9808936at2"/>
<dbReference type="UniPathway" id="UPA00219"/>
<dbReference type="Proteomes" id="UP000001961">
    <property type="component" value="Chromosome"/>
</dbReference>
<dbReference type="GO" id="GO:0005886">
    <property type="term" value="C:plasma membrane"/>
    <property type="evidence" value="ECO:0007669"/>
    <property type="project" value="UniProtKB-SubCell"/>
</dbReference>
<dbReference type="GO" id="GO:0051991">
    <property type="term" value="F:UDP-N-acetyl-D-glucosamine:N-acetylmuramoyl-L-alanyl-D-glutamyl-meso-2,6-diaminopimelyl-D-alanyl-D-alanine-diphosphoundecaprenol 4-beta-N-acetylglucosaminlytransferase activity"/>
    <property type="evidence" value="ECO:0007669"/>
    <property type="project" value="RHEA"/>
</dbReference>
<dbReference type="GO" id="GO:0050511">
    <property type="term" value="F:undecaprenyldiphospho-muramoylpentapeptide beta-N-acetylglucosaminyltransferase activity"/>
    <property type="evidence" value="ECO:0007669"/>
    <property type="project" value="UniProtKB-UniRule"/>
</dbReference>
<dbReference type="GO" id="GO:0005975">
    <property type="term" value="P:carbohydrate metabolic process"/>
    <property type="evidence" value="ECO:0007669"/>
    <property type="project" value="InterPro"/>
</dbReference>
<dbReference type="GO" id="GO:0051301">
    <property type="term" value="P:cell division"/>
    <property type="evidence" value="ECO:0007669"/>
    <property type="project" value="UniProtKB-KW"/>
</dbReference>
<dbReference type="GO" id="GO:0071555">
    <property type="term" value="P:cell wall organization"/>
    <property type="evidence" value="ECO:0007669"/>
    <property type="project" value="UniProtKB-KW"/>
</dbReference>
<dbReference type="GO" id="GO:0030259">
    <property type="term" value="P:lipid glycosylation"/>
    <property type="evidence" value="ECO:0007669"/>
    <property type="project" value="UniProtKB-UniRule"/>
</dbReference>
<dbReference type="GO" id="GO:0009252">
    <property type="term" value="P:peptidoglycan biosynthetic process"/>
    <property type="evidence" value="ECO:0007669"/>
    <property type="project" value="UniProtKB-UniRule"/>
</dbReference>
<dbReference type="GO" id="GO:0008360">
    <property type="term" value="P:regulation of cell shape"/>
    <property type="evidence" value="ECO:0007669"/>
    <property type="project" value="UniProtKB-KW"/>
</dbReference>
<dbReference type="CDD" id="cd03785">
    <property type="entry name" value="GT28_MurG"/>
    <property type="match status" value="1"/>
</dbReference>
<dbReference type="Gene3D" id="3.40.50.2000">
    <property type="entry name" value="Glycogen Phosphorylase B"/>
    <property type="match status" value="2"/>
</dbReference>
<dbReference type="HAMAP" id="MF_00033">
    <property type="entry name" value="MurG"/>
    <property type="match status" value="1"/>
</dbReference>
<dbReference type="InterPro" id="IPR006009">
    <property type="entry name" value="GlcNAc_MurG"/>
</dbReference>
<dbReference type="InterPro" id="IPR007235">
    <property type="entry name" value="Glyco_trans_28_C"/>
</dbReference>
<dbReference type="InterPro" id="IPR004276">
    <property type="entry name" value="GlycoTrans_28_N"/>
</dbReference>
<dbReference type="PANTHER" id="PTHR21015:SF22">
    <property type="entry name" value="GLYCOSYLTRANSFERASE"/>
    <property type="match status" value="1"/>
</dbReference>
<dbReference type="PANTHER" id="PTHR21015">
    <property type="entry name" value="UDP-N-ACETYLGLUCOSAMINE--N-ACETYLMURAMYL-(PENTAPEPTIDE) PYROPHOSPHORYL-UNDECAPRENOL N-ACETYLGLUCOSAMINE TRANSFERASE 1"/>
    <property type="match status" value="1"/>
</dbReference>
<dbReference type="Pfam" id="PF04101">
    <property type="entry name" value="Glyco_tran_28_C"/>
    <property type="match status" value="1"/>
</dbReference>
<dbReference type="Pfam" id="PF03033">
    <property type="entry name" value="Glyco_transf_28"/>
    <property type="match status" value="1"/>
</dbReference>
<dbReference type="SUPFAM" id="SSF53756">
    <property type="entry name" value="UDP-Glycosyltransferase/glycogen phosphorylase"/>
    <property type="match status" value="1"/>
</dbReference>
<reference key="1">
    <citation type="journal article" date="2006" name="Proc. Natl. Acad. Sci. U.S.A.">
        <title>Genome sequence of Synechococcus CC9311: insights into adaptation to a coastal environment.</title>
        <authorList>
            <person name="Palenik B."/>
            <person name="Ren Q."/>
            <person name="Dupont C.L."/>
            <person name="Myers G.S."/>
            <person name="Heidelberg J.F."/>
            <person name="Badger J.H."/>
            <person name="Madupu R."/>
            <person name="Nelson W.C."/>
            <person name="Brinkac L.M."/>
            <person name="Dodson R.J."/>
            <person name="Durkin A.S."/>
            <person name="Daugherty S.C."/>
            <person name="Sullivan S.A."/>
            <person name="Khouri H."/>
            <person name="Mohamoud Y."/>
            <person name="Halpin R."/>
            <person name="Paulsen I.T."/>
        </authorList>
    </citation>
    <scope>NUCLEOTIDE SEQUENCE [LARGE SCALE GENOMIC DNA]</scope>
    <source>
        <strain>CC9311</strain>
    </source>
</reference>
<keyword id="KW-0131">Cell cycle</keyword>
<keyword id="KW-0132">Cell division</keyword>
<keyword id="KW-0997">Cell inner membrane</keyword>
<keyword id="KW-1003">Cell membrane</keyword>
<keyword id="KW-0133">Cell shape</keyword>
<keyword id="KW-0961">Cell wall biogenesis/degradation</keyword>
<keyword id="KW-0328">Glycosyltransferase</keyword>
<keyword id="KW-0472">Membrane</keyword>
<keyword id="KW-0573">Peptidoglycan synthesis</keyword>
<keyword id="KW-1185">Reference proteome</keyword>
<keyword id="KW-0808">Transferase</keyword>
<organism>
    <name type="scientific">Synechococcus sp. (strain CC9311)</name>
    <dbReference type="NCBI Taxonomy" id="64471"/>
    <lineage>
        <taxon>Bacteria</taxon>
        <taxon>Bacillati</taxon>
        <taxon>Cyanobacteriota</taxon>
        <taxon>Cyanophyceae</taxon>
        <taxon>Synechococcales</taxon>
        <taxon>Synechococcaceae</taxon>
        <taxon>Synechococcus</taxon>
    </lineage>
</organism>
<evidence type="ECO:0000255" key="1">
    <source>
        <dbReference type="HAMAP-Rule" id="MF_00033"/>
    </source>
</evidence>
<comment type="function">
    <text evidence="1">Cell wall formation. Catalyzes the transfer of a GlcNAc subunit on undecaprenyl-pyrophosphoryl-MurNAc-pentapeptide (lipid intermediate I) to form undecaprenyl-pyrophosphoryl-MurNAc-(pentapeptide)GlcNAc (lipid intermediate II).</text>
</comment>
<comment type="catalytic activity">
    <reaction evidence="1">
        <text>di-trans,octa-cis-undecaprenyl diphospho-N-acetyl-alpha-D-muramoyl-L-alanyl-D-glutamyl-meso-2,6-diaminopimeloyl-D-alanyl-D-alanine + UDP-N-acetyl-alpha-D-glucosamine = di-trans,octa-cis-undecaprenyl diphospho-[N-acetyl-alpha-D-glucosaminyl-(1-&gt;4)]-N-acetyl-alpha-D-muramoyl-L-alanyl-D-glutamyl-meso-2,6-diaminopimeloyl-D-alanyl-D-alanine + UDP + H(+)</text>
        <dbReference type="Rhea" id="RHEA:31227"/>
        <dbReference type="ChEBI" id="CHEBI:15378"/>
        <dbReference type="ChEBI" id="CHEBI:57705"/>
        <dbReference type="ChEBI" id="CHEBI:58223"/>
        <dbReference type="ChEBI" id="CHEBI:61387"/>
        <dbReference type="ChEBI" id="CHEBI:61388"/>
        <dbReference type="EC" id="2.4.1.227"/>
    </reaction>
</comment>
<comment type="pathway">
    <text evidence="1">Cell wall biogenesis; peptidoglycan biosynthesis.</text>
</comment>
<comment type="subcellular location">
    <subcellularLocation>
        <location evidence="1">Cell inner membrane</location>
        <topology evidence="1">Peripheral membrane protein</topology>
        <orientation evidence="1">Cytoplasmic side</orientation>
    </subcellularLocation>
</comment>
<comment type="similarity">
    <text evidence="1">Belongs to the glycosyltransferase 28 family. MurG subfamily.</text>
</comment>
<protein>
    <recommendedName>
        <fullName evidence="1">UDP-N-acetylglucosamine--N-acetylmuramyl-(pentapeptide) pyrophosphoryl-undecaprenol N-acetylglucosamine transferase</fullName>
        <ecNumber evidence="1">2.4.1.227</ecNumber>
    </recommendedName>
    <alternativeName>
        <fullName evidence="1">Undecaprenyl-PP-MurNAc-pentapeptide-UDPGlcNAc GlcNAc transferase</fullName>
    </alternativeName>
</protein>